<evidence type="ECO:0000250" key="1"/>
<evidence type="ECO:0000250" key="2">
    <source>
        <dbReference type="UniProtKB" id="P38272"/>
    </source>
</evidence>
<evidence type="ECO:0000255" key="3"/>
<evidence type="ECO:0000256" key="4">
    <source>
        <dbReference type="SAM" id="MobiDB-lite"/>
    </source>
</evidence>
<evidence type="ECO:0000305" key="5"/>
<dbReference type="EMBL" id="FN393060">
    <property type="protein sequence ID" value="CBK39203.1"/>
    <property type="molecule type" value="Genomic_DNA"/>
</dbReference>
<dbReference type="SMR" id="D3UEM3"/>
<dbReference type="HOGENOM" id="CLU_038734_0_0_1"/>
<dbReference type="OrthoDB" id="39876at4893"/>
<dbReference type="Proteomes" id="UP000000286">
    <property type="component" value="Chromosome II, Scaffold EC1118_1B15"/>
</dbReference>
<dbReference type="GO" id="GO:0005789">
    <property type="term" value="C:endoplasmic reticulum membrane"/>
    <property type="evidence" value="ECO:0007669"/>
    <property type="project" value="UniProtKB-SubCell"/>
</dbReference>
<dbReference type="GO" id="GO:0003723">
    <property type="term" value="F:RNA binding"/>
    <property type="evidence" value="ECO:0007669"/>
    <property type="project" value="UniProtKB-KW"/>
</dbReference>
<dbReference type="GO" id="GO:0048309">
    <property type="term" value="P:endoplasmic reticulum inheritance"/>
    <property type="evidence" value="ECO:0007669"/>
    <property type="project" value="InterPro"/>
</dbReference>
<dbReference type="GO" id="GO:0051028">
    <property type="term" value="P:mRNA transport"/>
    <property type="evidence" value="ECO:0007669"/>
    <property type="project" value="UniProtKB-KW"/>
</dbReference>
<dbReference type="InterPro" id="IPR031398">
    <property type="entry name" value="She3"/>
</dbReference>
<dbReference type="Pfam" id="PF17078">
    <property type="entry name" value="SHE3"/>
    <property type="match status" value="1"/>
</dbReference>
<gene>
    <name type="primary">SHE3</name>
    <name type="ORF">EC1118_1B15_2839g</name>
</gene>
<reference key="1">
    <citation type="journal article" date="2009" name="Proc. Natl. Acad. Sci. U.S.A.">
        <title>Eukaryote-to-eukaryote gene transfer events revealed by the genome sequence of the wine yeast Saccharomyces cerevisiae EC1118.</title>
        <authorList>
            <person name="Novo M."/>
            <person name="Bigey F."/>
            <person name="Beyne E."/>
            <person name="Galeote V."/>
            <person name="Gavory F."/>
            <person name="Mallet S."/>
            <person name="Cambon B."/>
            <person name="Legras J.-L."/>
            <person name="Wincker P."/>
            <person name="Casaregola S."/>
            <person name="Dequin S."/>
        </authorList>
    </citation>
    <scope>NUCLEOTIDE SEQUENCE [LARGE SCALE GENOMIC DNA]</scope>
    <source>
        <strain>Lalvin EC1118 / Prise de mousse</strain>
    </source>
</reference>
<name>SHE3_YEAS8</name>
<accession>D3UEM3</accession>
<protein>
    <recommendedName>
        <fullName>SWI5-dependent HO expression protein 3</fullName>
    </recommendedName>
</protein>
<feature type="chain" id="PRO_0000408941" description="SWI5-dependent HO expression protein 3">
    <location>
        <begin position="1"/>
        <end position="425"/>
    </location>
</feature>
<feature type="region of interest" description="Disordered" evidence="4">
    <location>
        <begin position="24"/>
        <end position="45"/>
    </location>
</feature>
<feature type="region of interest" description="Disordered" evidence="4">
    <location>
        <begin position="322"/>
        <end position="425"/>
    </location>
</feature>
<feature type="coiled-coil region" evidence="3">
    <location>
        <begin position="68"/>
        <end position="197"/>
    </location>
</feature>
<feature type="compositionally biased region" description="Polar residues" evidence="4">
    <location>
        <begin position="35"/>
        <end position="45"/>
    </location>
</feature>
<feature type="compositionally biased region" description="Low complexity" evidence="4">
    <location>
        <begin position="326"/>
        <end position="338"/>
    </location>
</feature>
<feature type="compositionally biased region" description="Polar residues" evidence="4">
    <location>
        <begin position="345"/>
        <end position="358"/>
    </location>
</feature>
<feature type="compositionally biased region" description="Polar residues" evidence="4">
    <location>
        <begin position="382"/>
        <end position="397"/>
    </location>
</feature>
<feature type="modified residue" description="Phosphoserine" evidence="2">
    <location>
        <position position="343"/>
    </location>
</feature>
<feature type="modified residue" description="Phosphoserine" evidence="2">
    <location>
        <position position="394"/>
    </location>
</feature>
<comment type="function">
    <text evidence="1">RNA-binding protein that binds specific mRNAs including the ASH1 mRNA, coding for a repressor of the HO endonuclease. Part of the mRNA localization machinery that restricts accumulation of certain proteins to the bud and in the daughter cell. Required for the delivery of cortical endoplasmic reticulum into the emerging bud (By similarity).</text>
</comment>
<comment type="subcellular location">
    <subcellularLocation>
        <location evidence="1">Endoplasmic reticulum membrane</location>
        <topology evidence="1">Peripheral membrane protein</topology>
    </subcellularLocation>
</comment>
<comment type="similarity">
    <text evidence="5">Belongs to the SHE3 family.</text>
</comment>
<organism>
    <name type="scientific">Saccharomyces cerevisiae (strain Lalvin EC1118 / Prise de mousse)</name>
    <name type="common">Baker's yeast</name>
    <dbReference type="NCBI Taxonomy" id="643680"/>
    <lineage>
        <taxon>Eukaryota</taxon>
        <taxon>Fungi</taxon>
        <taxon>Dikarya</taxon>
        <taxon>Ascomycota</taxon>
        <taxon>Saccharomycotina</taxon>
        <taxon>Saccharomycetes</taxon>
        <taxon>Saccharomycetales</taxon>
        <taxon>Saccharomycetaceae</taxon>
        <taxon>Saccharomyces</taxon>
    </lineage>
</organism>
<proteinExistence type="inferred from homology"/>
<keyword id="KW-0175">Coiled coil</keyword>
<keyword id="KW-0256">Endoplasmic reticulum</keyword>
<keyword id="KW-0472">Membrane</keyword>
<keyword id="KW-0509">mRNA transport</keyword>
<keyword id="KW-0597">Phosphoprotein</keyword>
<keyword id="KW-0694">RNA-binding</keyword>
<keyword id="KW-0813">Transport</keyword>
<sequence length="425" mass="47516">MSDQDNTQTSSSKLAPHHNIFMANLESSPTKDRNTSSQNASSSRVIESLHDQIDMLTKTNLQLTTQSQNLLSKLELAQSKESKLLENLNLLKNENENLNSIFERKNKKLKELEKDYSELSNRYNEQKEKMDQLSKLAKNSSAIEQSCSEKLQNMEVNYNSLLESQNLYRDHYSDEISKLNEKIGLLELELSNQNLNYGSDTSSNSDIELNLNKFNDSVKDLKSLETEKDSKLSKIITHSLDELNLQSWLNLYQTNENLISTFAEKMDLKDVLKRNDEKISNKGAVVQTLKKNVQTQVESNNADALSSNNAQDMLPIKMVKLRKTPNTNDSSSNGNSSNNKRRSFYTASPLLSSGSIPKSASPVLPGVKRTASVRKPSSSSSKTNVTHNNDPSTSPTISVPPGVTRTVSSTHKKKRNSMVVHGAQS</sequence>